<gene>
    <name evidence="1" type="primary">dapB</name>
    <name type="ordered locus">RALTA_A2616</name>
</gene>
<dbReference type="EC" id="1.17.1.8" evidence="1"/>
<dbReference type="EMBL" id="CU633749">
    <property type="protein sequence ID" value="CAQ70547.1"/>
    <property type="molecule type" value="Genomic_DNA"/>
</dbReference>
<dbReference type="RefSeq" id="WP_012353843.1">
    <property type="nucleotide sequence ID" value="NC_010528.1"/>
</dbReference>
<dbReference type="SMR" id="B3R6R4"/>
<dbReference type="GeneID" id="29761946"/>
<dbReference type="KEGG" id="cti:RALTA_A2616"/>
<dbReference type="eggNOG" id="COG0289">
    <property type="taxonomic scope" value="Bacteria"/>
</dbReference>
<dbReference type="HOGENOM" id="CLU_047479_2_1_4"/>
<dbReference type="BioCyc" id="CTAI977880:RALTA_RS12725-MONOMER"/>
<dbReference type="UniPathway" id="UPA00034">
    <property type="reaction ID" value="UER00018"/>
</dbReference>
<dbReference type="Proteomes" id="UP000001692">
    <property type="component" value="Chromosome 1"/>
</dbReference>
<dbReference type="GO" id="GO:0005829">
    <property type="term" value="C:cytosol"/>
    <property type="evidence" value="ECO:0007669"/>
    <property type="project" value="TreeGrafter"/>
</dbReference>
<dbReference type="GO" id="GO:0008839">
    <property type="term" value="F:4-hydroxy-tetrahydrodipicolinate reductase"/>
    <property type="evidence" value="ECO:0007669"/>
    <property type="project" value="UniProtKB-EC"/>
</dbReference>
<dbReference type="GO" id="GO:0051287">
    <property type="term" value="F:NAD binding"/>
    <property type="evidence" value="ECO:0007669"/>
    <property type="project" value="UniProtKB-UniRule"/>
</dbReference>
<dbReference type="GO" id="GO:0050661">
    <property type="term" value="F:NADP binding"/>
    <property type="evidence" value="ECO:0007669"/>
    <property type="project" value="UniProtKB-UniRule"/>
</dbReference>
<dbReference type="GO" id="GO:0016726">
    <property type="term" value="F:oxidoreductase activity, acting on CH or CH2 groups, NAD or NADP as acceptor"/>
    <property type="evidence" value="ECO:0007669"/>
    <property type="project" value="UniProtKB-UniRule"/>
</dbReference>
<dbReference type="GO" id="GO:0019877">
    <property type="term" value="P:diaminopimelate biosynthetic process"/>
    <property type="evidence" value="ECO:0007669"/>
    <property type="project" value="UniProtKB-UniRule"/>
</dbReference>
<dbReference type="GO" id="GO:0009089">
    <property type="term" value="P:lysine biosynthetic process via diaminopimelate"/>
    <property type="evidence" value="ECO:0007669"/>
    <property type="project" value="UniProtKB-UniRule"/>
</dbReference>
<dbReference type="CDD" id="cd02274">
    <property type="entry name" value="DHDPR_N"/>
    <property type="match status" value="1"/>
</dbReference>
<dbReference type="FunFam" id="3.30.360.10:FF:000004">
    <property type="entry name" value="4-hydroxy-tetrahydrodipicolinate reductase"/>
    <property type="match status" value="1"/>
</dbReference>
<dbReference type="FunFam" id="3.40.50.720:FF:000048">
    <property type="entry name" value="4-hydroxy-tetrahydrodipicolinate reductase"/>
    <property type="match status" value="1"/>
</dbReference>
<dbReference type="Gene3D" id="3.30.360.10">
    <property type="entry name" value="Dihydrodipicolinate Reductase, domain 2"/>
    <property type="match status" value="1"/>
</dbReference>
<dbReference type="Gene3D" id="3.40.50.720">
    <property type="entry name" value="NAD(P)-binding Rossmann-like Domain"/>
    <property type="match status" value="1"/>
</dbReference>
<dbReference type="HAMAP" id="MF_00102">
    <property type="entry name" value="DapB"/>
    <property type="match status" value="1"/>
</dbReference>
<dbReference type="InterPro" id="IPR022663">
    <property type="entry name" value="DapB_C"/>
</dbReference>
<dbReference type="InterPro" id="IPR000846">
    <property type="entry name" value="DapB_N"/>
</dbReference>
<dbReference type="InterPro" id="IPR022664">
    <property type="entry name" value="DapB_N_CS"/>
</dbReference>
<dbReference type="InterPro" id="IPR023940">
    <property type="entry name" value="DHDPR_bac"/>
</dbReference>
<dbReference type="InterPro" id="IPR036291">
    <property type="entry name" value="NAD(P)-bd_dom_sf"/>
</dbReference>
<dbReference type="NCBIfam" id="TIGR00036">
    <property type="entry name" value="dapB"/>
    <property type="match status" value="1"/>
</dbReference>
<dbReference type="PANTHER" id="PTHR20836:SF0">
    <property type="entry name" value="4-HYDROXY-TETRAHYDRODIPICOLINATE REDUCTASE 1, CHLOROPLASTIC-RELATED"/>
    <property type="match status" value="1"/>
</dbReference>
<dbReference type="PANTHER" id="PTHR20836">
    <property type="entry name" value="DIHYDRODIPICOLINATE REDUCTASE"/>
    <property type="match status" value="1"/>
</dbReference>
<dbReference type="Pfam" id="PF05173">
    <property type="entry name" value="DapB_C"/>
    <property type="match status" value="1"/>
</dbReference>
<dbReference type="Pfam" id="PF01113">
    <property type="entry name" value="DapB_N"/>
    <property type="match status" value="1"/>
</dbReference>
<dbReference type="PIRSF" id="PIRSF000161">
    <property type="entry name" value="DHPR"/>
    <property type="match status" value="1"/>
</dbReference>
<dbReference type="SUPFAM" id="SSF55347">
    <property type="entry name" value="Glyceraldehyde-3-phosphate dehydrogenase-like, C-terminal domain"/>
    <property type="match status" value="1"/>
</dbReference>
<dbReference type="SUPFAM" id="SSF51735">
    <property type="entry name" value="NAD(P)-binding Rossmann-fold domains"/>
    <property type="match status" value="1"/>
</dbReference>
<dbReference type="PROSITE" id="PS01298">
    <property type="entry name" value="DAPB"/>
    <property type="match status" value="1"/>
</dbReference>
<protein>
    <recommendedName>
        <fullName evidence="1">4-hydroxy-tetrahydrodipicolinate reductase</fullName>
        <shortName evidence="1">HTPA reductase</shortName>
        <ecNumber evidence="1">1.17.1.8</ecNumber>
    </recommendedName>
</protein>
<keyword id="KW-0028">Amino-acid biosynthesis</keyword>
<keyword id="KW-0963">Cytoplasm</keyword>
<keyword id="KW-0220">Diaminopimelate biosynthesis</keyword>
<keyword id="KW-0457">Lysine biosynthesis</keyword>
<keyword id="KW-0520">NAD</keyword>
<keyword id="KW-0521">NADP</keyword>
<keyword id="KW-0560">Oxidoreductase</keyword>
<reference key="1">
    <citation type="journal article" date="2008" name="Genome Res.">
        <title>Genome sequence of the beta-rhizobium Cupriavidus taiwanensis and comparative genomics of rhizobia.</title>
        <authorList>
            <person name="Amadou C."/>
            <person name="Pascal G."/>
            <person name="Mangenot S."/>
            <person name="Glew M."/>
            <person name="Bontemps C."/>
            <person name="Capela D."/>
            <person name="Carrere S."/>
            <person name="Cruveiller S."/>
            <person name="Dossat C."/>
            <person name="Lajus A."/>
            <person name="Marchetti M."/>
            <person name="Poinsot V."/>
            <person name="Rouy Z."/>
            <person name="Servin B."/>
            <person name="Saad M."/>
            <person name="Schenowitz C."/>
            <person name="Barbe V."/>
            <person name="Batut J."/>
            <person name="Medigue C."/>
            <person name="Masson-Boivin C."/>
        </authorList>
    </citation>
    <scope>NUCLEOTIDE SEQUENCE [LARGE SCALE GENOMIC DNA]</scope>
    <source>
        <strain>DSM 17343 / BCRC 17206 / CCUG 44338 / CIP 107171 / LMG 19424 / R1</strain>
    </source>
</reference>
<accession>B3R6R4</accession>
<name>DAPB_CUPTR</name>
<proteinExistence type="inferred from homology"/>
<organism>
    <name type="scientific">Cupriavidus taiwanensis (strain DSM 17343 / BCRC 17206 / CCUG 44338 / CIP 107171 / LMG 19424 / R1)</name>
    <name type="common">Ralstonia taiwanensis (strain LMG 19424)</name>
    <dbReference type="NCBI Taxonomy" id="977880"/>
    <lineage>
        <taxon>Bacteria</taxon>
        <taxon>Pseudomonadati</taxon>
        <taxon>Pseudomonadota</taxon>
        <taxon>Betaproteobacteria</taxon>
        <taxon>Burkholderiales</taxon>
        <taxon>Burkholderiaceae</taxon>
        <taxon>Cupriavidus</taxon>
    </lineage>
</organism>
<evidence type="ECO:0000255" key="1">
    <source>
        <dbReference type="HAMAP-Rule" id="MF_00102"/>
    </source>
</evidence>
<evidence type="ECO:0000305" key="2"/>
<feature type="chain" id="PRO_1000093963" description="4-hydroxy-tetrahydrodipicolinate reductase">
    <location>
        <begin position="1"/>
        <end position="265"/>
    </location>
</feature>
<feature type="active site" description="Proton donor/acceptor" evidence="1">
    <location>
        <position position="153"/>
    </location>
</feature>
<feature type="active site" description="Proton donor" evidence="1">
    <location>
        <position position="157"/>
    </location>
</feature>
<feature type="binding site" evidence="1">
    <location>
        <begin position="7"/>
        <end position="12"/>
    </location>
    <ligand>
        <name>NAD(+)</name>
        <dbReference type="ChEBI" id="CHEBI:57540"/>
    </ligand>
</feature>
<feature type="binding site" evidence="1">
    <location>
        <position position="33"/>
    </location>
    <ligand>
        <name>NAD(+)</name>
        <dbReference type="ChEBI" id="CHEBI:57540"/>
    </ligand>
</feature>
<feature type="binding site" evidence="1">
    <location>
        <begin position="96"/>
        <end position="98"/>
    </location>
    <ligand>
        <name>NAD(+)</name>
        <dbReference type="ChEBI" id="CHEBI:57540"/>
    </ligand>
</feature>
<feature type="binding site" evidence="1">
    <location>
        <begin position="120"/>
        <end position="123"/>
    </location>
    <ligand>
        <name>NAD(+)</name>
        <dbReference type="ChEBI" id="CHEBI:57540"/>
    </ligand>
</feature>
<feature type="binding site" evidence="1">
    <location>
        <position position="154"/>
    </location>
    <ligand>
        <name>(S)-2,3,4,5-tetrahydrodipicolinate</name>
        <dbReference type="ChEBI" id="CHEBI:16845"/>
    </ligand>
</feature>
<feature type="binding site" evidence="1">
    <location>
        <begin position="163"/>
        <end position="164"/>
    </location>
    <ligand>
        <name>(S)-2,3,4,5-tetrahydrodipicolinate</name>
        <dbReference type="ChEBI" id="CHEBI:16845"/>
    </ligand>
</feature>
<sequence length="265" mass="27384">MNIAIAGASGRMGRMLIEQVLNTEGVTLSGALDVPGSPALGQDAGLFLGRNTGVAITADLEAGLAGADCLIDFTRPEGTLVHLAAAKQLGVKMVVGTTGFDEAGKAALAEAAKSIGIVFAANFSVGVNATFKLLEVAAKLLSTGYDIEVIEAHHRFKVDAPSGTALKMGEVIADALGRDLKTCGVFAREGHTGERDPNSIGFATIRGGDIVGDHTVMFAGIGERIEISHKSSSRQSYADGAVRSARFLADKPTGLFDMQDVLGLK</sequence>
<comment type="function">
    <text evidence="1">Catalyzes the conversion of 4-hydroxy-tetrahydrodipicolinate (HTPA) to tetrahydrodipicolinate.</text>
</comment>
<comment type="catalytic activity">
    <reaction evidence="1">
        <text>(S)-2,3,4,5-tetrahydrodipicolinate + NAD(+) + H2O = (2S,4S)-4-hydroxy-2,3,4,5-tetrahydrodipicolinate + NADH + H(+)</text>
        <dbReference type="Rhea" id="RHEA:35323"/>
        <dbReference type="ChEBI" id="CHEBI:15377"/>
        <dbReference type="ChEBI" id="CHEBI:15378"/>
        <dbReference type="ChEBI" id="CHEBI:16845"/>
        <dbReference type="ChEBI" id="CHEBI:57540"/>
        <dbReference type="ChEBI" id="CHEBI:57945"/>
        <dbReference type="ChEBI" id="CHEBI:67139"/>
        <dbReference type="EC" id="1.17.1.8"/>
    </reaction>
</comment>
<comment type="catalytic activity">
    <reaction evidence="1">
        <text>(S)-2,3,4,5-tetrahydrodipicolinate + NADP(+) + H2O = (2S,4S)-4-hydroxy-2,3,4,5-tetrahydrodipicolinate + NADPH + H(+)</text>
        <dbReference type="Rhea" id="RHEA:35331"/>
        <dbReference type="ChEBI" id="CHEBI:15377"/>
        <dbReference type="ChEBI" id="CHEBI:15378"/>
        <dbReference type="ChEBI" id="CHEBI:16845"/>
        <dbReference type="ChEBI" id="CHEBI:57783"/>
        <dbReference type="ChEBI" id="CHEBI:58349"/>
        <dbReference type="ChEBI" id="CHEBI:67139"/>
        <dbReference type="EC" id="1.17.1.8"/>
    </reaction>
</comment>
<comment type="pathway">
    <text evidence="1">Amino-acid biosynthesis; L-lysine biosynthesis via DAP pathway; (S)-tetrahydrodipicolinate from L-aspartate: step 4/4.</text>
</comment>
<comment type="subcellular location">
    <subcellularLocation>
        <location evidence="1">Cytoplasm</location>
    </subcellularLocation>
</comment>
<comment type="similarity">
    <text evidence="1">Belongs to the DapB family.</text>
</comment>
<comment type="caution">
    <text evidence="2">Was originally thought to be a dihydrodipicolinate reductase (DHDPR), catalyzing the conversion of dihydrodipicolinate to tetrahydrodipicolinate. However, it was shown in E.coli that the substrate of the enzymatic reaction is not dihydrodipicolinate (DHDP) but in fact (2S,4S)-4-hydroxy-2,3,4,5-tetrahydrodipicolinic acid (HTPA), the product released by the DapA-catalyzed reaction.</text>
</comment>